<feature type="chain" id="PRO_0000360340" description="NAD(P)H-quinone oxidoreductase subunit 4L, chloroplastic">
    <location>
        <begin position="1"/>
        <end position="101"/>
    </location>
</feature>
<feature type="transmembrane region" description="Helical" evidence="1">
    <location>
        <begin position="2"/>
        <end position="22"/>
    </location>
</feature>
<feature type="transmembrane region" description="Helical" evidence="1">
    <location>
        <begin position="32"/>
        <end position="52"/>
    </location>
</feature>
<feature type="transmembrane region" description="Helical" evidence="1">
    <location>
        <begin position="61"/>
        <end position="81"/>
    </location>
</feature>
<proteinExistence type="inferred from homology"/>
<accession>A4QLG1</accession>
<name>NU4LC_LEPVR</name>
<organism>
    <name type="scientific">Lepidium virginicum</name>
    <name type="common">Virginia pepperweed</name>
    <dbReference type="NCBI Taxonomy" id="59292"/>
    <lineage>
        <taxon>Eukaryota</taxon>
        <taxon>Viridiplantae</taxon>
        <taxon>Streptophyta</taxon>
        <taxon>Embryophyta</taxon>
        <taxon>Tracheophyta</taxon>
        <taxon>Spermatophyta</taxon>
        <taxon>Magnoliopsida</taxon>
        <taxon>eudicotyledons</taxon>
        <taxon>Gunneridae</taxon>
        <taxon>Pentapetalae</taxon>
        <taxon>rosids</taxon>
        <taxon>malvids</taxon>
        <taxon>Brassicales</taxon>
        <taxon>Brassicaceae</taxon>
        <taxon>Lepidieae</taxon>
        <taxon>Lepidium</taxon>
    </lineage>
</organism>
<protein>
    <recommendedName>
        <fullName evidence="1">NAD(P)H-quinone oxidoreductase subunit 4L, chloroplastic</fullName>
        <ecNumber evidence="1">7.1.1.-</ecNumber>
    </recommendedName>
    <alternativeName>
        <fullName evidence="1">NAD(P)H dehydrogenase subunit 4L</fullName>
    </alternativeName>
    <alternativeName>
        <fullName evidence="1">NADH-plastoquinone oxidoreductase subunit 4L</fullName>
    </alternativeName>
</protein>
<comment type="function">
    <text evidence="1">NDH shuttles electrons from NAD(P)H:plastoquinone, via FMN and iron-sulfur (Fe-S) centers, to quinones in the photosynthetic chain and possibly in a chloroplast respiratory chain. The immediate electron acceptor for the enzyme in this species is believed to be plastoquinone. Couples the redox reaction to proton translocation, and thus conserves the redox energy in a proton gradient.</text>
</comment>
<comment type="catalytic activity">
    <reaction evidence="1">
        <text>a plastoquinone + NADH + (n+1) H(+)(in) = a plastoquinol + NAD(+) + n H(+)(out)</text>
        <dbReference type="Rhea" id="RHEA:42608"/>
        <dbReference type="Rhea" id="RHEA-COMP:9561"/>
        <dbReference type="Rhea" id="RHEA-COMP:9562"/>
        <dbReference type="ChEBI" id="CHEBI:15378"/>
        <dbReference type="ChEBI" id="CHEBI:17757"/>
        <dbReference type="ChEBI" id="CHEBI:57540"/>
        <dbReference type="ChEBI" id="CHEBI:57945"/>
        <dbReference type="ChEBI" id="CHEBI:62192"/>
    </reaction>
</comment>
<comment type="catalytic activity">
    <reaction evidence="1">
        <text>a plastoquinone + NADPH + (n+1) H(+)(in) = a plastoquinol + NADP(+) + n H(+)(out)</text>
        <dbReference type="Rhea" id="RHEA:42612"/>
        <dbReference type="Rhea" id="RHEA-COMP:9561"/>
        <dbReference type="Rhea" id="RHEA-COMP:9562"/>
        <dbReference type="ChEBI" id="CHEBI:15378"/>
        <dbReference type="ChEBI" id="CHEBI:17757"/>
        <dbReference type="ChEBI" id="CHEBI:57783"/>
        <dbReference type="ChEBI" id="CHEBI:58349"/>
        <dbReference type="ChEBI" id="CHEBI:62192"/>
    </reaction>
</comment>
<comment type="subunit">
    <text evidence="1">NDH is composed of at least 16 different subunits, 5 of which are encoded in the nucleus.</text>
</comment>
<comment type="subcellular location">
    <subcellularLocation>
        <location evidence="1">Plastid</location>
        <location evidence="1">Chloroplast thylakoid membrane</location>
        <topology evidence="1">Multi-pass membrane protein</topology>
    </subcellularLocation>
</comment>
<comment type="similarity">
    <text evidence="1">Belongs to the complex I subunit 4L family.</text>
</comment>
<gene>
    <name evidence="1" type="primary">ndhE</name>
</gene>
<geneLocation type="chloroplast"/>
<sequence length="101" mass="11262">MILEHVLVLSAYLFLIGLYGLITSRNMVRALMCLELILNAVNMNFVTFSDFFDNSQLKGDIFCIFVIAIAAAEAAIGLAIVSSIYRNRKSTRINQSTLLNK</sequence>
<reference key="1">
    <citation type="submission" date="2007-03" db="EMBL/GenBank/DDBJ databases">
        <title>Sequencing analysis of Lepidium virginicum JO26 chloroplast DNA.</title>
        <authorList>
            <person name="Hosouchi T."/>
            <person name="Tsuruoka H."/>
            <person name="Kotani H."/>
        </authorList>
    </citation>
    <scope>NUCLEOTIDE SEQUENCE [LARGE SCALE GENOMIC DNA]</scope>
</reference>
<keyword id="KW-0150">Chloroplast</keyword>
<keyword id="KW-0472">Membrane</keyword>
<keyword id="KW-0520">NAD</keyword>
<keyword id="KW-0521">NADP</keyword>
<keyword id="KW-0934">Plastid</keyword>
<keyword id="KW-0618">Plastoquinone</keyword>
<keyword id="KW-0874">Quinone</keyword>
<keyword id="KW-0793">Thylakoid</keyword>
<keyword id="KW-1278">Translocase</keyword>
<keyword id="KW-0812">Transmembrane</keyword>
<keyword id="KW-1133">Transmembrane helix</keyword>
<keyword id="KW-0813">Transport</keyword>
<evidence type="ECO:0000255" key="1">
    <source>
        <dbReference type="HAMAP-Rule" id="MF_01456"/>
    </source>
</evidence>
<dbReference type="EC" id="7.1.1.-" evidence="1"/>
<dbReference type="EMBL" id="AP009374">
    <property type="protein sequence ID" value="BAF50516.1"/>
    <property type="molecule type" value="Genomic_DNA"/>
</dbReference>
<dbReference type="RefSeq" id="YP_001123691.1">
    <property type="nucleotide sequence ID" value="NC_009273.1"/>
</dbReference>
<dbReference type="SMR" id="A4QLG1"/>
<dbReference type="GeneID" id="4962007"/>
<dbReference type="GO" id="GO:0009535">
    <property type="term" value="C:chloroplast thylakoid membrane"/>
    <property type="evidence" value="ECO:0007669"/>
    <property type="project" value="UniProtKB-SubCell"/>
</dbReference>
<dbReference type="GO" id="GO:0030964">
    <property type="term" value="C:NADH dehydrogenase complex"/>
    <property type="evidence" value="ECO:0007669"/>
    <property type="project" value="TreeGrafter"/>
</dbReference>
<dbReference type="GO" id="GO:0016655">
    <property type="term" value="F:oxidoreductase activity, acting on NAD(P)H, quinone or similar compound as acceptor"/>
    <property type="evidence" value="ECO:0007669"/>
    <property type="project" value="UniProtKB-UniRule"/>
</dbReference>
<dbReference type="GO" id="GO:0048038">
    <property type="term" value="F:quinone binding"/>
    <property type="evidence" value="ECO:0007669"/>
    <property type="project" value="UniProtKB-KW"/>
</dbReference>
<dbReference type="GO" id="GO:0042773">
    <property type="term" value="P:ATP synthesis coupled electron transport"/>
    <property type="evidence" value="ECO:0007669"/>
    <property type="project" value="InterPro"/>
</dbReference>
<dbReference type="GO" id="GO:0019684">
    <property type="term" value="P:photosynthesis, light reaction"/>
    <property type="evidence" value="ECO:0007669"/>
    <property type="project" value="UniProtKB-UniRule"/>
</dbReference>
<dbReference type="FunFam" id="1.10.287.3510:FF:000001">
    <property type="entry name" value="NADH-quinone oxidoreductase subunit K"/>
    <property type="match status" value="1"/>
</dbReference>
<dbReference type="Gene3D" id="1.10.287.3510">
    <property type="match status" value="1"/>
</dbReference>
<dbReference type="HAMAP" id="MF_01456">
    <property type="entry name" value="NDH1_NuoK"/>
    <property type="match status" value="1"/>
</dbReference>
<dbReference type="InterPro" id="IPR001133">
    <property type="entry name" value="NADH_UbQ_OxRdtase_chain4L/K"/>
</dbReference>
<dbReference type="InterPro" id="IPR039428">
    <property type="entry name" value="NUOK/Mnh_C1-like"/>
</dbReference>
<dbReference type="NCBIfam" id="NF004320">
    <property type="entry name" value="PRK05715.1-2"/>
    <property type="match status" value="1"/>
</dbReference>
<dbReference type="NCBIfam" id="NF004322">
    <property type="entry name" value="PRK05715.1-4"/>
    <property type="match status" value="1"/>
</dbReference>
<dbReference type="PANTHER" id="PTHR11434:SF16">
    <property type="entry name" value="NADH-UBIQUINONE OXIDOREDUCTASE CHAIN 4L"/>
    <property type="match status" value="1"/>
</dbReference>
<dbReference type="PANTHER" id="PTHR11434">
    <property type="entry name" value="NADH-UBIQUINONE OXIDOREDUCTASE SUBUNIT ND4L"/>
    <property type="match status" value="1"/>
</dbReference>
<dbReference type="Pfam" id="PF00420">
    <property type="entry name" value="Oxidored_q2"/>
    <property type="match status" value="1"/>
</dbReference>